<protein>
    <recommendedName>
        <fullName>Stomatin-like protein 2, mitochondrial</fullName>
        <shortName>SLP-2</shortName>
    </recommendedName>
    <alternativeName>
        <fullName>EPB72-like protein 2</fullName>
    </alternativeName>
    <alternativeName>
        <fullName>Paraprotein target 7</fullName>
        <shortName>Paratarg-7</shortName>
    </alternativeName>
</protein>
<proteinExistence type="evidence at protein level"/>
<keyword id="KW-0007">Acetylation</keyword>
<keyword id="KW-0025">Alternative splicing</keyword>
<keyword id="KW-1003">Cell membrane</keyword>
<keyword id="KW-0175">Coiled coil</keyword>
<keyword id="KW-0963">Cytoplasm</keyword>
<keyword id="KW-0206">Cytoskeleton</keyword>
<keyword id="KW-0903">Direct protein sequencing</keyword>
<keyword id="KW-0446">Lipid-binding</keyword>
<keyword id="KW-0449">Lipoprotein</keyword>
<keyword id="KW-0472">Membrane</keyword>
<keyword id="KW-0496">Mitochondrion</keyword>
<keyword id="KW-0999">Mitochondrion inner membrane</keyword>
<keyword id="KW-0597">Phosphoprotein</keyword>
<keyword id="KW-1267">Proteomics identification</keyword>
<keyword id="KW-1185">Reference proteome</keyword>
<keyword id="KW-0809">Transit peptide</keyword>
<accession>Q9UJZ1</accession>
<accession>B4E1K7</accession>
<accession>D3DRN3</accession>
<accession>O60376</accession>
<accession>Q53G29</accession>
<accession>Q96FY2</accession>
<accession>Q9P042</accession>
<comment type="function">
    <text evidence="8 10 11 12 13 15">Mitochondrial protein that probably regulates the biogenesis and the activity of mitochondria. Stimulates cardiolipin biosynthesis, binds cardiolipin-enriched membranes where it recruits and stabilizes some proteins including prohibitin and may therefore act in the organization of functional microdomains in mitochondrial membranes. Through regulation of the mitochondrial function may play a role into several biological processes including cell migration, cell proliferation, T-cell activation, calcium homeostasis and cellular response to stress. May play a role in calcium homeostasis through negative regulation of calcium efflux from mitochondria. Required for mitochondrial hyperfusion a pro-survival cellular response to stress which results in increased ATP production by mitochondria. May also regulate the organization of functional domains at the plasma membrane and play a role in T-cell activation through association with the T-cell receptor signaling complex and its regulation.</text>
</comment>
<comment type="subunit">
    <text evidence="1 8 9 13">Forms homooligomers. Interacts with MFN2; may form heterooligomers. Interacts with CACNA2D2 (By similarity). Interacts with PHB1 and PHB2; recruits them to cardiolipin-enriched mitochondrial membranes and stabilizes them.</text>
</comment>
<comment type="interaction">
    <interactant intactId="EBI-1044428">
        <id>Q9UJZ1</id>
    </interactant>
    <interactant intactId="EBI-25891409">
        <id>Q99700-5</id>
        <label>ATXN2</label>
    </interactant>
    <organismsDiffer>false</organismsDiffer>
    <experiments>3</experiments>
</comment>
<comment type="interaction">
    <interactant intactId="EBI-1044428">
        <id>Q9UJZ1</id>
    </interactant>
    <interactant intactId="EBI-988601">
        <id>O43933</id>
        <label>PEX1</label>
    </interactant>
    <organismsDiffer>false</organismsDiffer>
    <experiments>3</experiments>
</comment>
<comment type="interaction">
    <interactant intactId="EBI-1044428">
        <id>Q9UJZ1</id>
    </interactant>
    <interactant intactId="EBI-712367">
        <id>Q9UI14</id>
        <label>RABAC1</label>
    </interactant>
    <organismsDiffer>false</organismsDiffer>
    <experiments>3</experiments>
</comment>
<comment type="interaction">
    <interactant intactId="EBI-1044428">
        <id>Q9UJZ1</id>
    </interactant>
    <interactant intactId="EBI-720609">
        <id>O76024</id>
        <label>WFS1</label>
    </interactant>
    <organismsDiffer>false</organismsDiffer>
    <experiments>3</experiments>
</comment>
<comment type="subcellular location">
    <subcellularLocation>
        <location evidence="5 10 13 15">Cell membrane</location>
        <topology evidence="5">Peripheral membrane protein</topology>
    </subcellularLocation>
    <subcellularLocation>
        <location evidence="10 11 15">Mitochondrion</location>
    </subcellularLocation>
    <subcellularLocation>
        <location evidence="8 9 13">Mitochondrion inner membrane</location>
        <topology evidence="13">Lipid-anchor</topology>
    </subcellularLocation>
    <subcellularLocation>
        <location evidence="8">Mitochondrion intermembrane space</location>
    </subcellularLocation>
    <subcellularLocation>
        <location evidence="10">Membrane raft</location>
    </subcellularLocation>
    <subcellularLocation>
        <location evidence="5 10">Cytoplasm</location>
        <location evidence="5 10">Cytoskeleton</location>
    </subcellularLocation>
    <text evidence="5 10 13 15">Behaves as an integral membrane protein of the mitochondrion despite the absence of a detectable transmembrane domain (PubMed:21746876). Also associates with the actin cytoskeleton and membrane rafts in activated T-cells (PubMed:10713127, PubMed:18641330). A minor pool is associated with the plasma membrane and is enriched at the immunological synapse in activated T-cells (PubMed:22623988).</text>
</comment>
<comment type="alternative products">
    <event type="alternative splicing"/>
    <isoform>
        <id>Q9UJZ1-1</id>
        <name>1</name>
        <sequence type="displayed"/>
    </isoform>
    <isoform>
        <id>Q9UJZ1-2</id>
        <name>2</name>
        <sequence type="described" ref="VSP_054651"/>
    </isoform>
</comment>
<comment type="tissue specificity">
    <text evidence="5 6 10">Ubiquitously expressed at low levels. Expressed in lymphoid tissues (at protein level).</text>
</comment>
<comment type="induction">
    <text evidence="10 13">Up-regulated in activated B- and T-cells and upon mitochondrial stress by chloramphenicol.</text>
</comment>
<comment type="PTM">
    <text>Hyperphosphorylated at Ser-17 in some patients with monoclonal gammopathy of undetermined significance (MGUS), multiple myeloma (MM) and Waldenstrom macroglobulinemia due to impaired dephosphorylation by PP2A.</text>
</comment>
<comment type="miscellaneous">
    <text evidence="18">Paratarg-7/STOML2 is a frequent autoantigenic target in monoclonal gammopathy of undetermined significance (MGUS), multiple myeloma (MM) and Waldenstrom macroglobulinemia, 3 B-cell neoplasms associated with excessive secretion of a single monoclonal gammaglobulin (also named paraprotein) in the blood.</text>
</comment>
<comment type="similarity">
    <text evidence="17">Belongs to the band 7/mec-2 family.</text>
</comment>
<comment type="sequence caution" evidence="17">
    <conflict type="erroneous gene model prediction">
        <sequence resource="EMBL-CDS" id="AAC07983"/>
    </conflict>
</comment>
<comment type="sequence caution" evidence="17">
    <conflict type="frameshift">
        <sequence resource="EMBL-CDS" id="AAF29073"/>
    </conflict>
</comment>
<comment type="online information" name="Atlas of Genetics and Cytogenetics in Oncology and Haematology">
    <link uri="https://atlasgeneticsoncology.org/gene/44346/STOML2"/>
</comment>
<sequence length="356" mass="38534">MLARAARGTGALLLRGSLLASGRAPRRASSGLPRNTVVLFVPQQEAWVVERMGRFHRILEPGLNILIPVLDRIRYVQSLKEIVINVPEQSAVTLDNVTLQIDGVLYLRIMDPYKASYGVEDPEYAVTQLAQTTMRSELGKLSLDKVFRERESLNASIVDAINQAADCWGIRCLRYEIKDIHVPPRVKESMQMQVEAERRKRATVLESEGTRESAINVAEGKKQAQILASEAEKAEQINQAAGEASAVLAKAKAKAEAIRILAAALTQHNGDAAASLTVAEQYVSAFSKLAKDSNTILLPSNPGDVTSMVAQAMGVYGALTKAPVPGTPDSLSSGSSRDVQGTDASLDEELDRVKMS</sequence>
<evidence type="ECO:0000250" key="1"/>
<evidence type="ECO:0000250" key="2">
    <source>
        <dbReference type="UniProtKB" id="Q99JB2"/>
    </source>
</evidence>
<evidence type="ECO:0000255" key="3"/>
<evidence type="ECO:0000256" key="4">
    <source>
        <dbReference type="SAM" id="MobiDB-lite"/>
    </source>
</evidence>
<evidence type="ECO:0000269" key="5">
    <source>
    </source>
</evidence>
<evidence type="ECO:0000269" key="6">
    <source>
    </source>
</evidence>
<evidence type="ECO:0000269" key="7">
    <source>
    </source>
</evidence>
<evidence type="ECO:0000269" key="8">
    <source>
    </source>
</evidence>
<evidence type="ECO:0000269" key="9">
    <source>
    </source>
</evidence>
<evidence type="ECO:0000269" key="10">
    <source>
    </source>
</evidence>
<evidence type="ECO:0000269" key="11">
    <source>
    </source>
</evidence>
<evidence type="ECO:0000269" key="12">
    <source>
    </source>
</evidence>
<evidence type="ECO:0000269" key="13">
    <source>
    </source>
</evidence>
<evidence type="ECO:0000269" key="14">
    <source>
    </source>
</evidence>
<evidence type="ECO:0000269" key="15">
    <source>
    </source>
</evidence>
<evidence type="ECO:0000303" key="16">
    <source>
    </source>
</evidence>
<evidence type="ECO:0000305" key="17"/>
<evidence type="ECO:0000305" key="18">
    <source>
    </source>
</evidence>
<evidence type="ECO:0007744" key="19">
    <source>
    </source>
</evidence>
<evidence type="ECO:0007744" key="20">
    <source>
    </source>
</evidence>
<evidence type="ECO:0007744" key="21">
    <source>
    </source>
</evidence>
<evidence type="ECO:0007744" key="22">
    <source>
    </source>
</evidence>
<feature type="transit peptide" description="Mitochondrion" evidence="17">
    <location>
        <begin position="1"/>
        <end position="28"/>
    </location>
</feature>
<feature type="chain" id="PRO_0000094031" description="Stomatin-like protein 2, mitochondrial">
    <location>
        <begin position="29"/>
        <end position="356"/>
    </location>
</feature>
<feature type="region of interest" description="Disordered" evidence="4">
    <location>
        <begin position="321"/>
        <end position="356"/>
    </location>
</feature>
<feature type="coiled-coil region" evidence="3">
    <location>
        <begin position="215"/>
        <end position="252"/>
    </location>
</feature>
<feature type="compositionally biased region" description="Polar residues" evidence="4">
    <location>
        <begin position="329"/>
        <end position="343"/>
    </location>
</feature>
<feature type="modified residue" description="Phosphoserine; by PKC/PRKCZ" evidence="14">
    <location>
        <position position="17"/>
    </location>
</feature>
<feature type="modified residue" description="Phosphotyrosine" evidence="19">
    <location>
        <position position="124"/>
    </location>
</feature>
<feature type="modified residue" description="N6-acetyllysine; alternate" evidence="20">
    <location>
        <position position="145"/>
    </location>
</feature>
<feature type="modified residue" description="N6-succinyllysine; alternate" evidence="2">
    <location>
        <position position="145"/>
    </location>
</feature>
<feature type="modified residue" description="N6-acetyllysine" evidence="20">
    <location>
        <position position="233"/>
    </location>
</feature>
<feature type="modified residue" description="Phosphothreonine" evidence="21 22">
    <location>
        <position position="327"/>
    </location>
</feature>
<feature type="modified residue" description="Phosphoserine" evidence="21 22">
    <location>
        <position position="330"/>
    </location>
</feature>
<feature type="splice variant" id="VSP_054651" description="In isoform 2." evidence="16">
    <location>
        <begin position="149"/>
        <end position="193"/>
    </location>
</feature>
<feature type="sequence variant" id="VAR_026830" description="In dbSNP:rs17856326." evidence="7">
    <original>L</original>
    <variation>P</variation>
    <location>
        <position position="129"/>
    </location>
</feature>
<feature type="sequence conflict" description="In Ref. 5; AAC07983." evidence="17" ref="5">
    <original>L</original>
    <variation>M</variation>
    <location>
        <position position="14"/>
    </location>
</feature>
<feature type="sequence conflict" description="In Ref. 4; BAD96822." evidence="17" ref="4">
    <original>V</original>
    <variation>I</variation>
    <location>
        <position position="83"/>
    </location>
</feature>
<feature type="sequence conflict" description="In Ref. 8; AAF29073." evidence="17" ref="8">
    <original>A</original>
    <variation>P</variation>
    <location>
        <position position="202"/>
    </location>
</feature>
<reference key="1">
    <citation type="journal article" date="2000" name="J. Biol. Chem.">
        <title>Identification and characterization of human SLP-2, a novel homologue of stomatin (band 7.2b) present in erythrocytes and other tissues.</title>
        <authorList>
            <person name="Wang Y."/>
            <person name="Morrow J.S."/>
        </authorList>
    </citation>
    <scope>NUCLEOTIDE SEQUENCE [MRNA] (ISOFORM 1)</scope>
    <scope>SUBCELLULAR LOCATION</scope>
    <scope>TISSUE SPECIFICITY</scope>
    <source>
        <tissue>Heart muscle</tissue>
    </source>
</reference>
<reference key="2">
    <citation type="journal article" date="2001" name="Cytogenet. Cell Genet.">
        <title>A novel member of the stomatin/EPB72/mec-2 family, stomatin-like 2 (STOML2), is ubiquitously expressed and localizes to HSA chromosome 9p13.1.</title>
        <authorList>
            <person name="Owczarek C.M."/>
            <person name="Treutlein H.R."/>
            <person name="Portbury K.J."/>
            <person name="Gulluyan L.M."/>
            <person name="Kola I."/>
            <person name="Hertzog P.J."/>
        </authorList>
    </citation>
    <scope>NUCLEOTIDE SEQUENCE [GENOMIC DNA / MRNA] (ISOFORM 1)</scope>
    <scope>TISSUE SPECIFICITY</scope>
    <source>
        <tissue>Fetal brain</tissue>
    </source>
</reference>
<reference key="3">
    <citation type="journal article" date="2004" name="Nat. Genet.">
        <title>Complete sequencing and characterization of 21,243 full-length human cDNAs.</title>
        <authorList>
            <person name="Ota T."/>
            <person name="Suzuki Y."/>
            <person name="Nishikawa T."/>
            <person name="Otsuki T."/>
            <person name="Sugiyama T."/>
            <person name="Irie R."/>
            <person name="Wakamatsu A."/>
            <person name="Hayashi K."/>
            <person name="Sato H."/>
            <person name="Nagai K."/>
            <person name="Kimura K."/>
            <person name="Makita H."/>
            <person name="Sekine M."/>
            <person name="Obayashi M."/>
            <person name="Nishi T."/>
            <person name="Shibahara T."/>
            <person name="Tanaka T."/>
            <person name="Ishii S."/>
            <person name="Yamamoto J."/>
            <person name="Saito K."/>
            <person name="Kawai Y."/>
            <person name="Isono Y."/>
            <person name="Nakamura Y."/>
            <person name="Nagahari K."/>
            <person name="Murakami K."/>
            <person name="Yasuda T."/>
            <person name="Iwayanagi T."/>
            <person name="Wagatsuma M."/>
            <person name="Shiratori A."/>
            <person name="Sudo H."/>
            <person name="Hosoiri T."/>
            <person name="Kaku Y."/>
            <person name="Kodaira H."/>
            <person name="Kondo H."/>
            <person name="Sugawara M."/>
            <person name="Takahashi M."/>
            <person name="Kanda K."/>
            <person name="Yokoi T."/>
            <person name="Furuya T."/>
            <person name="Kikkawa E."/>
            <person name="Omura Y."/>
            <person name="Abe K."/>
            <person name="Kamihara K."/>
            <person name="Katsuta N."/>
            <person name="Sato K."/>
            <person name="Tanikawa M."/>
            <person name="Yamazaki M."/>
            <person name="Ninomiya K."/>
            <person name="Ishibashi T."/>
            <person name="Yamashita H."/>
            <person name="Murakawa K."/>
            <person name="Fujimori K."/>
            <person name="Tanai H."/>
            <person name="Kimata M."/>
            <person name="Watanabe M."/>
            <person name="Hiraoka S."/>
            <person name="Chiba Y."/>
            <person name="Ishida S."/>
            <person name="Ono Y."/>
            <person name="Takiguchi S."/>
            <person name="Watanabe S."/>
            <person name="Yosida M."/>
            <person name="Hotuta T."/>
            <person name="Kusano J."/>
            <person name="Kanehori K."/>
            <person name="Takahashi-Fujii A."/>
            <person name="Hara H."/>
            <person name="Tanase T.-O."/>
            <person name="Nomura Y."/>
            <person name="Togiya S."/>
            <person name="Komai F."/>
            <person name="Hara R."/>
            <person name="Takeuchi K."/>
            <person name="Arita M."/>
            <person name="Imose N."/>
            <person name="Musashino K."/>
            <person name="Yuuki H."/>
            <person name="Oshima A."/>
            <person name="Sasaki N."/>
            <person name="Aotsuka S."/>
            <person name="Yoshikawa Y."/>
            <person name="Matsunawa H."/>
            <person name="Ichihara T."/>
            <person name="Shiohata N."/>
            <person name="Sano S."/>
            <person name="Moriya S."/>
            <person name="Momiyama H."/>
            <person name="Satoh N."/>
            <person name="Takami S."/>
            <person name="Terashima Y."/>
            <person name="Suzuki O."/>
            <person name="Nakagawa S."/>
            <person name="Senoh A."/>
            <person name="Mizoguchi H."/>
            <person name="Goto Y."/>
            <person name="Shimizu F."/>
            <person name="Wakebe H."/>
            <person name="Hishigaki H."/>
            <person name="Watanabe T."/>
            <person name="Sugiyama A."/>
            <person name="Takemoto M."/>
            <person name="Kawakami B."/>
            <person name="Yamazaki M."/>
            <person name="Watanabe K."/>
            <person name="Kumagai A."/>
            <person name="Itakura S."/>
            <person name="Fukuzumi Y."/>
            <person name="Fujimori Y."/>
            <person name="Komiyama M."/>
            <person name="Tashiro H."/>
            <person name="Tanigami A."/>
            <person name="Fujiwara T."/>
            <person name="Ono T."/>
            <person name="Yamada K."/>
            <person name="Fujii Y."/>
            <person name="Ozaki K."/>
            <person name="Hirao M."/>
            <person name="Ohmori Y."/>
            <person name="Kawabata A."/>
            <person name="Hikiji T."/>
            <person name="Kobatake N."/>
            <person name="Inagaki H."/>
            <person name="Ikema Y."/>
            <person name="Okamoto S."/>
            <person name="Okitani R."/>
            <person name="Kawakami T."/>
            <person name="Noguchi S."/>
            <person name="Itoh T."/>
            <person name="Shigeta K."/>
            <person name="Senba T."/>
            <person name="Matsumura K."/>
            <person name="Nakajima Y."/>
            <person name="Mizuno T."/>
            <person name="Morinaga M."/>
            <person name="Sasaki M."/>
            <person name="Togashi T."/>
            <person name="Oyama M."/>
            <person name="Hata H."/>
            <person name="Watanabe M."/>
            <person name="Komatsu T."/>
            <person name="Mizushima-Sugano J."/>
            <person name="Satoh T."/>
            <person name="Shirai Y."/>
            <person name="Takahashi Y."/>
            <person name="Nakagawa K."/>
            <person name="Okumura K."/>
            <person name="Nagase T."/>
            <person name="Nomura N."/>
            <person name="Kikuchi H."/>
            <person name="Masuho Y."/>
            <person name="Yamashita R."/>
            <person name="Nakai K."/>
            <person name="Yada T."/>
            <person name="Nakamura Y."/>
            <person name="Ohara O."/>
            <person name="Isogai T."/>
            <person name="Sugano S."/>
        </authorList>
    </citation>
    <scope>NUCLEOTIDE SEQUENCE [LARGE SCALE MRNA] (ISOFORMS 1 AND 2)</scope>
    <source>
        <tissue>Trachea</tissue>
    </source>
</reference>
<reference key="4">
    <citation type="submission" date="2005-04" db="EMBL/GenBank/DDBJ databases">
        <authorList>
            <person name="Suzuki Y."/>
            <person name="Sugano S."/>
            <person name="Totoki Y."/>
            <person name="Toyoda A."/>
            <person name="Takeda T."/>
            <person name="Sakaki Y."/>
            <person name="Tanaka A."/>
            <person name="Yokoyama S."/>
        </authorList>
    </citation>
    <scope>NUCLEOTIDE SEQUENCE [LARGE SCALE MRNA] (ISOFORM 1)</scope>
</reference>
<reference key="5">
    <citation type="journal article" date="2004" name="Nature">
        <title>DNA sequence and analysis of human chromosome 9.</title>
        <authorList>
            <person name="Humphray S.J."/>
            <person name="Oliver K."/>
            <person name="Hunt A.R."/>
            <person name="Plumb R.W."/>
            <person name="Loveland J.E."/>
            <person name="Howe K.L."/>
            <person name="Andrews T.D."/>
            <person name="Searle S."/>
            <person name="Hunt S.E."/>
            <person name="Scott C.E."/>
            <person name="Jones M.C."/>
            <person name="Ainscough R."/>
            <person name="Almeida J.P."/>
            <person name="Ambrose K.D."/>
            <person name="Ashwell R.I.S."/>
            <person name="Babbage A.K."/>
            <person name="Babbage S."/>
            <person name="Bagguley C.L."/>
            <person name="Bailey J."/>
            <person name="Banerjee R."/>
            <person name="Barker D.J."/>
            <person name="Barlow K.F."/>
            <person name="Bates K."/>
            <person name="Beasley H."/>
            <person name="Beasley O."/>
            <person name="Bird C.P."/>
            <person name="Bray-Allen S."/>
            <person name="Brown A.J."/>
            <person name="Brown J.Y."/>
            <person name="Burford D."/>
            <person name="Burrill W."/>
            <person name="Burton J."/>
            <person name="Carder C."/>
            <person name="Carter N.P."/>
            <person name="Chapman J.C."/>
            <person name="Chen Y."/>
            <person name="Clarke G."/>
            <person name="Clark S.Y."/>
            <person name="Clee C.M."/>
            <person name="Clegg S."/>
            <person name="Collier R.E."/>
            <person name="Corby N."/>
            <person name="Crosier M."/>
            <person name="Cummings A.T."/>
            <person name="Davies J."/>
            <person name="Dhami P."/>
            <person name="Dunn M."/>
            <person name="Dutta I."/>
            <person name="Dyer L.W."/>
            <person name="Earthrowl M.E."/>
            <person name="Faulkner L."/>
            <person name="Fleming C.J."/>
            <person name="Frankish A."/>
            <person name="Frankland J.A."/>
            <person name="French L."/>
            <person name="Fricker D.G."/>
            <person name="Garner P."/>
            <person name="Garnett J."/>
            <person name="Ghori J."/>
            <person name="Gilbert J.G.R."/>
            <person name="Glison C."/>
            <person name="Grafham D.V."/>
            <person name="Gribble S."/>
            <person name="Griffiths C."/>
            <person name="Griffiths-Jones S."/>
            <person name="Grocock R."/>
            <person name="Guy J."/>
            <person name="Hall R.E."/>
            <person name="Hammond S."/>
            <person name="Harley J.L."/>
            <person name="Harrison E.S.I."/>
            <person name="Hart E.A."/>
            <person name="Heath P.D."/>
            <person name="Henderson C.D."/>
            <person name="Hopkins B.L."/>
            <person name="Howard P.J."/>
            <person name="Howden P.J."/>
            <person name="Huckle E."/>
            <person name="Johnson C."/>
            <person name="Johnson D."/>
            <person name="Joy A.A."/>
            <person name="Kay M."/>
            <person name="Keenan S."/>
            <person name="Kershaw J.K."/>
            <person name="Kimberley A.M."/>
            <person name="King A."/>
            <person name="Knights A."/>
            <person name="Laird G.K."/>
            <person name="Langford C."/>
            <person name="Lawlor S."/>
            <person name="Leongamornlert D.A."/>
            <person name="Leversha M."/>
            <person name="Lloyd C."/>
            <person name="Lloyd D.M."/>
            <person name="Lovell J."/>
            <person name="Martin S."/>
            <person name="Mashreghi-Mohammadi M."/>
            <person name="Matthews L."/>
            <person name="McLaren S."/>
            <person name="McLay K.E."/>
            <person name="McMurray A."/>
            <person name="Milne S."/>
            <person name="Nickerson T."/>
            <person name="Nisbett J."/>
            <person name="Nordsiek G."/>
            <person name="Pearce A.V."/>
            <person name="Peck A.I."/>
            <person name="Porter K.M."/>
            <person name="Pandian R."/>
            <person name="Pelan S."/>
            <person name="Phillimore B."/>
            <person name="Povey S."/>
            <person name="Ramsey Y."/>
            <person name="Rand V."/>
            <person name="Scharfe M."/>
            <person name="Sehra H.K."/>
            <person name="Shownkeen R."/>
            <person name="Sims S.K."/>
            <person name="Skuce C.D."/>
            <person name="Smith M."/>
            <person name="Steward C.A."/>
            <person name="Swarbreck D."/>
            <person name="Sycamore N."/>
            <person name="Tester J."/>
            <person name="Thorpe A."/>
            <person name="Tracey A."/>
            <person name="Tromans A."/>
            <person name="Thomas D.W."/>
            <person name="Wall M."/>
            <person name="Wallis J.M."/>
            <person name="West A.P."/>
            <person name="Whitehead S.L."/>
            <person name="Willey D.L."/>
            <person name="Williams S.A."/>
            <person name="Wilming L."/>
            <person name="Wray P.W."/>
            <person name="Young L."/>
            <person name="Ashurst J.L."/>
            <person name="Coulson A."/>
            <person name="Blocker H."/>
            <person name="Durbin R.M."/>
            <person name="Sulston J.E."/>
            <person name="Hubbard T."/>
            <person name="Jackson M.J."/>
            <person name="Bentley D.R."/>
            <person name="Beck S."/>
            <person name="Rogers J."/>
            <person name="Dunham I."/>
        </authorList>
    </citation>
    <scope>NUCLEOTIDE SEQUENCE [LARGE SCALE GENOMIC DNA]</scope>
</reference>
<reference key="6">
    <citation type="submission" date="2005-09" db="EMBL/GenBank/DDBJ databases">
        <authorList>
            <person name="Mural R.J."/>
            <person name="Istrail S."/>
            <person name="Sutton G.G."/>
            <person name="Florea L."/>
            <person name="Halpern A.L."/>
            <person name="Mobarry C.M."/>
            <person name="Lippert R."/>
            <person name="Walenz B."/>
            <person name="Shatkay H."/>
            <person name="Dew I."/>
            <person name="Miller J.R."/>
            <person name="Flanigan M.J."/>
            <person name="Edwards N.J."/>
            <person name="Bolanos R."/>
            <person name="Fasulo D."/>
            <person name="Halldorsson B.V."/>
            <person name="Hannenhalli S."/>
            <person name="Turner R."/>
            <person name="Yooseph S."/>
            <person name="Lu F."/>
            <person name="Nusskern D.R."/>
            <person name="Shue B.C."/>
            <person name="Zheng X.H."/>
            <person name="Zhong F."/>
            <person name="Delcher A.L."/>
            <person name="Huson D.H."/>
            <person name="Kravitz S.A."/>
            <person name="Mouchard L."/>
            <person name="Reinert K."/>
            <person name="Remington K.A."/>
            <person name="Clark A.G."/>
            <person name="Waterman M.S."/>
            <person name="Eichler E.E."/>
            <person name="Adams M.D."/>
            <person name="Hunkapiller M.W."/>
            <person name="Myers E.W."/>
            <person name="Venter J.C."/>
        </authorList>
    </citation>
    <scope>NUCLEOTIDE SEQUENCE [LARGE SCALE GENOMIC DNA]</scope>
</reference>
<reference key="7">
    <citation type="journal article" date="2004" name="Genome Res.">
        <title>The status, quality, and expansion of the NIH full-length cDNA project: the Mammalian Gene Collection (MGC).</title>
        <authorList>
            <consortium name="The MGC Project Team"/>
        </authorList>
    </citation>
    <scope>NUCLEOTIDE SEQUENCE [LARGE SCALE MRNA] (ISOFORM 1)</scope>
    <scope>VARIANT PRO-129</scope>
    <source>
        <tissue>Lung</tissue>
        <tissue>Pancreas</tissue>
        <tissue>Skin</tissue>
    </source>
</reference>
<reference key="8">
    <citation type="journal article" date="2000" name="Genome Res.">
        <title>Cloning and functional analysis of cDNAs with open reading frames for 300 previously undefined genes expressed in CD34+ hematopoietic stem/progenitor cells.</title>
        <authorList>
            <person name="Zhang Q.-H."/>
            <person name="Ye M."/>
            <person name="Wu X.-Y."/>
            <person name="Ren S.-X."/>
            <person name="Zhao M."/>
            <person name="Zhao C.-J."/>
            <person name="Fu G."/>
            <person name="Shen Y."/>
            <person name="Fan H.-Y."/>
            <person name="Lu G."/>
            <person name="Zhong M."/>
            <person name="Xu X.-R."/>
            <person name="Han Z.-G."/>
            <person name="Zhang J.-W."/>
            <person name="Tao J."/>
            <person name="Huang Q.-H."/>
            <person name="Zhou J."/>
            <person name="Hu G.-X."/>
            <person name="Gu J."/>
            <person name="Chen S.-J."/>
            <person name="Chen Z."/>
        </authorList>
    </citation>
    <scope>NUCLEOTIDE SEQUENCE [LARGE SCALE MRNA] OF 9-356 (ISOFORM 1)</scope>
    <source>
        <tissue>Umbilical cord blood</tissue>
    </source>
</reference>
<reference key="9">
    <citation type="submission" date="2005-06" db="UniProtKB">
        <authorList>
            <person name="Bienvenut W.V."/>
        </authorList>
    </citation>
    <scope>PROTEIN SEQUENCE OF 188-197; 201-211 AND 234-250</scope>
    <scope>IDENTIFICATION BY MASS SPECTROMETRY</scope>
    <source>
        <tissue>B-cell lymphoma</tissue>
    </source>
</reference>
<reference key="10">
    <citation type="journal article" date="2006" name="Proteins">
        <title>Mass spectrometrical verification of stomatin-like protein 2 (SLP-2) primary structure.</title>
        <authorList>
            <person name="John J.P."/>
            <person name="Anrather D."/>
            <person name="Pollak A."/>
            <person name="Lubec G."/>
        </authorList>
    </citation>
    <scope>PARTIAL PROTEIN SEQUENCE</scope>
    <scope>IDENTIFICATION BY MASS SPECTROMETRY</scope>
</reference>
<reference key="11">
    <citation type="journal article" date="2005" name="Nat. Biotechnol.">
        <title>Immunoaffinity profiling of tyrosine phosphorylation in cancer cells.</title>
        <authorList>
            <person name="Rush J."/>
            <person name="Moritz A."/>
            <person name="Lee K.A."/>
            <person name="Guo A."/>
            <person name="Goss V.L."/>
            <person name="Spek E.J."/>
            <person name="Zhang H."/>
            <person name="Zha X.-M."/>
            <person name="Polakiewicz R.D."/>
            <person name="Comb M.J."/>
        </authorList>
    </citation>
    <scope>PHOSPHORYLATION [LARGE SCALE ANALYSIS] AT TYR-124</scope>
    <scope>IDENTIFICATION BY MASS SPECTROMETRY [LARGE SCALE ANALYSIS]</scope>
</reference>
<reference key="12">
    <citation type="journal article" date="2007" name="J. Biol. Chem.">
        <title>Identification of a novel mitochondrial complex containing mitofusin 2 and stomatin-like protein 2.</title>
        <authorList>
            <person name="Hajek P."/>
            <person name="Chomyn A."/>
            <person name="Attardi G."/>
        </authorList>
    </citation>
    <scope>FUNCTION</scope>
    <scope>IDENTIFICATION BY MASS SPECTROMETRY</scope>
    <scope>INTERACTION WITH MFN2</scope>
    <scope>SUBCELLULAR LOCATION</scope>
</reference>
<reference key="13">
    <citation type="journal article" date="2008" name="Biochim. Biophys. Acta">
        <title>SLP-2 interacts with prohibitins in the mitochondrial inner membrane and contributes to their stability.</title>
        <authorList>
            <person name="Da Cruz S."/>
            <person name="Parone P.A."/>
            <person name="Gonzalo P."/>
            <person name="Bienvenut W.V."/>
            <person name="Tondera D."/>
            <person name="Jourdain A."/>
            <person name="Quadroni M."/>
            <person name="Martinou J.C."/>
        </authorList>
    </citation>
    <scope>SUBCELLULAR LOCATION</scope>
    <scope>INTERACTION WITH PHB1 AND PHB2</scope>
</reference>
<reference key="14">
    <citation type="journal article" date="2008" name="J. Immunol.">
        <title>Modulation of T cell activation by stomatin-like protein 2.</title>
        <authorList>
            <person name="Kirchhof M.G."/>
            <person name="Chau L.A."/>
            <person name="Lemke C.D."/>
            <person name="Vardhana S."/>
            <person name="Darlington P.J."/>
            <person name="Marquez M.E."/>
            <person name="Taylor R."/>
            <person name="Rizkalla K."/>
            <person name="Blanca I."/>
            <person name="Dustin M.L."/>
            <person name="Madrenas J."/>
        </authorList>
    </citation>
    <scope>FUNCTION IN T-CELL ACTIVATION</scope>
    <scope>SUBCELLULAR LOCATION</scope>
    <scope>TISSUE SPECIFICITY</scope>
    <scope>INDUCTION</scope>
</reference>
<reference key="15">
    <citation type="journal article" date="2009" name="Cancer Biol. Ther.">
        <title>Downregulation of a mitochondria associated protein SLP-2 inhibits tumor cell motility, proliferation and enhances cell sensitivity to chemotherapeutic reagents.</title>
        <authorList>
            <person name="Wang Y."/>
            <person name="Cao W."/>
            <person name="Yu Z."/>
            <person name="Liu Z."/>
        </authorList>
    </citation>
    <scope>FUNCTION</scope>
    <scope>SUBCELLULAR LOCATION</scope>
</reference>
<reference key="16">
    <citation type="journal article" date="2009" name="Int. J. Cancer">
        <title>A frequent target of paraproteins in the sera of patients with multiple myeloma and MGUS.</title>
        <authorList>
            <person name="Preuss K.D."/>
            <person name="Pfreundschuh M."/>
            <person name="Ahlgrimm M."/>
            <person name="Fadle N."/>
            <person name="Regitz E."/>
            <person name="Murawski N."/>
            <person name="Grass S."/>
        </authorList>
    </citation>
    <scope>IDENTIFICATION AS A COMMON ANTIGEN IN B-CELL NEOPLASMS</scope>
</reference>
<reference key="17">
    <citation type="journal article" date="2009" name="Science">
        <title>Lysine acetylation targets protein complexes and co-regulates major cellular functions.</title>
        <authorList>
            <person name="Choudhary C."/>
            <person name="Kumar C."/>
            <person name="Gnad F."/>
            <person name="Nielsen M.L."/>
            <person name="Rehman M."/>
            <person name="Walther T.C."/>
            <person name="Olsen J.V."/>
            <person name="Mann M."/>
        </authorList>
    </citation>
    <scope>ACETYLATION [LARGE SCALE ANALYSIS] AT LYS-145 AND LYS-233</scope>
    <scope>IDENTIFICATION BY MASS SPECTROMETRY [LARGE SCALE ANALYSIS]</scope>
</reference>
<reference key="18">
    <citation type="journal article" date="2010" name="Cell Calcium">
        <title>SLP-2 negatively modulates mitochondrial sodium-calcium exchange.</title>
        <authorList>
            <person name="Da Cruz S."/>
            <person name="De Marchi U."/>
            <person name="Frieden M."/>
            <person name="Parone P.A."/>
            <person name="Martinou J.C."/>
            <person name="Demaurex N."/>
        </authorList>
    </citation>
    <scope>FUNCTION IN CALCIUM HOMEOSTASIS</scope>
</reference>
<reference key="19">
    <citation type="journal article" date="2011" name="BMC Syst. Biol.">
        <title>Initial characterization of the human central proteome.</title>
        <authorList>
            <person name="Burkard T.R."/>
            <person name="Planyavsky M."/>
            <person name="Kaupe I."/>
            <person name="Breitwieser F.P."/>
            <person name="Buerckstuemmer T."/>
            <person name="Bennett K.L."/>
            <person name="Superti-Furga G."/>
            <person name="Colinge J."/>
        </authorList>
    </citation>
    <scope>IDENTIFICATION BY MASS SPECTROMETRY [LARGE SCALE ANALYSIS]</scope>
</reference>
<reference key="20">
    <citation type="journal article" date="2011" name="Blood">
        <title>Hyperphosphorylation of autoantigenic targets of paraproteins is due to inactivation of PP2A.</title>
        <authorList>
            <person name="Preuss K.D."/>
            <person name="Pfreundschuh M."/>
            <person name="Fadle N."/>
            <person name="Regitz E."/>
            <person name="Raudies S."/>
            <person name="Murwaski N."/>
            <person name="Ahlgrimm M."/>
            <person name="Bittenbring J."/>
            <person name="Klotz M."/>
            <person name="Schafer K.H."/>
            <person name="Held G."/>
            <person name="Neumann F."/>
            <person name="Grass S."/>
        </authorList>
    </citation>
    <scope>PHOSPHORYLATION AT SER-17</scope>
</reference>
<reference key="21">
    <citation type="journal article" date="2011" name="Mol. Cell. Biol.">
        <title>Stomatin-like protein 2 binds cardiolipin and regulates mitochondrial biogenesis and function.</title>
        <authorList>
            <person name="Christie D.A."/>
            <person name="Lemke C.D."/>
            <person name="Elias I.M."/>
            <person name="Chau L.A."/>
            <person name="Kirchhof M.G."/>
            <person name="Li B."/>
            <person name="Ball E.H."/>
            <person name="Dunn S.D."/>
            <person name="Hatch G.M."/>
            <person name="Madrenas J."/>
        </authorList>
    </citation>
    <scope>FUNCTION IN MITOCHONDRIAL BIOGENESIS</scope>
    <scope>SUBCELLULAR LOCATION</scope>
    <scope>INTERACTION WITH PHB1 AND PHB2</scope>
    <scope>CARDIOLIPIN-BINDING</scope>
    <scope>INDUCTION</scope>
</reference>
<reference key="22">
    <citation type="journal article" date="2012" name="PLoS ONE">
        <title>Mitochondrial and plasma membrane pools of stomatin-like protein 2 coalesce at the immunological synapse during T cell activation.</title>
        <authorList>
            <person name="Christie D.A."/>
            <person name="Kirchhof M.G."/>
            <person name="Vardhana S."/>
            <person name="Dustin M.L."/>
            <person name="Madrenas J."/>
        </authorList>
    </citation>
    <scope>FUNCTION IN T-CELL ACTIVATION</scope>
    <scope>SUBCELLULAR LOCATION</scope>
    <scope>HOMOOLIGOMERIZATION</scope>
</reference>
<reference key="23">
    <citation type="journal article" date="2013" name="J. Proteome Res.">
        <title>Toward a comprehensive characterization of a human cancer cell phosphoproteome.</title>
        <authorList>
            <person name="Zhou H."/>
            <person name="Di Palma S."/>
            <person name="Preisinger C."/>
            <person name="Peng M."/>
            <person name="Polat A.N."/>
            <person name="Heck A.J."/>
            <person name="Mohammed S."/>
        </authorList>
    </citation>
    <scope>PHOSPHORYLATION [LARGE SCALE ANALYSIS] AT THR-327 AND SER-330</scope>
    <scope>IDENTIFICATION BY MASS SPECTROMETRY [LARGE SCALE ANALYSIS]</scope>
    <source>
        <tissue>Cervix carcinoma</tissue>
        <tissue>Erythroleukemia</tissue>
    </source>
</reference>
<reference key="24">
    <citation type="journal article" date="2014" name="J. Proteomics">
        <title>An enzyme assisted RP-RPLC approach for in-depth analysis of human liver phosphoproteome.</title>
        <authorList>
            <person name="Bian Y."/>
            <person name="Song C."/>
            <person name="Cheng K."/>
            <person name="Dong M."/>
            <person name="Wang F."/>
            <person name="Huang J."/>
            <person name="Sun D."/>
            <person name="Wang L."/>
            <person name="Ye M."/>
            <person name="Zou H."/>
        </authorList>
    </citation>
    <scope>PHOSPHORYLATION [LARGE SCALE ANALYSIS] AT THR-327 AND SER-330</scope>
    <scope>IDENTIFICATION BY MASS SPECTROMETRY [LARGE SCALE ANALYSIS]</scope>
    <source>
        <tissue>Liver</tissue>
    </source>
</reference>
<reference key="25">
    <citation type="journal article" date="2015" name="Proteomics">
        <title>N-terminome analysis of the human mitochondrial proteome.</title>
        <authorList>
            <person name="Vaca Jacome A.S."/>
            <person name="Rabilloud T."/>
            <person name="Schaeffer-Reiss C."/>
            <person name="Rompais M."/>
            <person name="Ayoub D."/>
            <person name="Lane L."/>
            <person name="Bairoch A."/>
            <person name="Van Dorsselaer A."/>
            <person name="Carapito C."/>
        </authorList>
    </citation>
    <scope>IDENTIFICATION BY MASS SPECTROMETRY [LARGE SCALE ANALYSIS]</scope>
</reference>
<name>STML2_HUMAN</name>
<organism>
    <name type="scientific">Homo sapiens</name>
    <name type="common">Human</name>
    <dbReference type="NCBI Taxonomy" id="9606"/>
    <lineage>
        <taxon>Eukaryota</taxon>
        <taxon>Metazoa</taxon>
        <taxon>Chordata</taxon>
        <taxon>Craniata</taxon>
        <taxon>Vertebrata</taxon>
        <taxon>Euteleostomi</taxon>
        <taxon>Mammalia</taxon>
        <taxon>Eutheria</taxon>
        <taxon>Euarchontoglires</taxon>
        <taxon>Primates</taxon>
        <taxon>Haplorrhini</taxon>
        <taxon>Catarrhini</taxon>
        <taxon>Hominidae</taxon>
        <taxon>Homo</taxon>
    </lineage>
</organism>
<gene>
    <name type="primary">STOML2</name>
    <name type="synonym">SLP2</name>
    <name type="ORF">HSPC108</name>
</gene>
<dbReference type="EMBL" id="AF190167">
    <property type="protein sequence ID" value="AAF09142.1"/>
    <property type="molecule type" value="mRNA"/>
</dbReference>
<dbReference type="EMBL" id="AF282596">
    <property type="protein sequence ID" value="AAF91466.1"/>
    <property type="molecule type" value="mRNA"/>
</dbReference>
<dbReference type="EMBL" id="AK027405">
    <property type="protein sequence ID" value="BAB55091.1"/>
    <property type="molecule type" value="mRNA"/>
</dbReference>
<dbReference type="EMBL" id="AK303883">
    <property type="protein sequence ID" value="BAG64819.1"/>
    <property type="molecule type" value="mRNA"/>
</dbReference>
<dbReference type="EMBL" id="AK223102">
    <property type="protein sequence ID" value="BAD96822.1"/>
    <property type="molecule type" value="mRNA"/>
</dbReference>
<dbReference type="EMBL" id="AL353795">
    <property type="status" value="NOT_ANNOTATED_CDS"/>
    <property type="molecule type" value="Genomic_DNA"/>
</dbReference>
<dbReference type="EMBL" id="AC004472">
    <property type="protein sequence ID" value="AAC07983.1"/>
    <property type="status" value="ALT_SEQ"/>
    <property type="molecule type" value="Genomic_DNA"/>
</dbReference>
<dbReference type="EMBL" id="CH471071">
    <property type="protein sequence ID" value="EAW58395.1"/>
    <property type="molecule type" value="Genomic_DNA"/>
</dbReference>
<dbReference type="EMBL" id="CH471071">
    <property type="protein sequence ID" value="EAW58396.1"/>
    <property type="molecule type" value="Genomic_DNA"/>
</dbReference>
<dbReference type="EMBL" id="BC002442">
    <property type="protein sequence ID" value="AAH02442.1"/>
    <property type="molecule type" value="mRNA"/>
</dbReference>
<dbReference type="EMBL" id="BC003025">
    <property type="protein sequence ID" value="AAH03025.1"/>
    <property type="molecule type" value="mRNA"/>
</dbReference>
<dbReference type="EMBL" id="BC010152">
    <property type="protein sequence ID" value="AAH10152.1"/>
    <property type="molecule type" value="mRNA"/>
</dbReference>
<dbReference type="EMBL" id="BC014990">
    <property type="protein sequence ID" value="AAH14990.1"/>
    <property type="molecule type" value="mRNA"/>
</dbReference>
<dbReference type="EMBL" id="AF161458">
    <property type="protein sequence ID" value="AAF29073.1"/>
    <property type="status" value="ALT_FRAME"/>
    <property type="molecule type" value="mRNA"/>
</dbReference>
<dbReference type="CCDS" id="CCDS6577.1">
    <molecule id="Q9UJZ1-1"/>
</dbReference>
<dbReference type="CCDS" id="CCDS69588.1">
    <molecule id="Q9UJZ1-2"/>
</dbReference>
<dbReference type="PIR" id="T02246">
    <property type="entry name" value="T02246"/>
</dbReference>
<dbReference type="RefSeq" id="NP_001273960.1">
    <molecule id="Q9UJZ1-2"/>
    <property type="nucleotide sequence ID" value="NM_001287031.2"/>
</dbReference>
<dbReference type="RefSeq" id="NP_001273961.1">
    <property type="nucleotide sequence ID" value="NM_001287032.1"/>
</dbReference>
<dbReference type="RefSeq" id="NP_038470.1">
    <molecule id="Q9UJZ1-1"/>
    <property type="nucleotide sequence ID" value="NM_013442.3"/>
</dbReference>
<dbReference type="SMR" id="Q9UJZ1"/>
<dbReference type="BioGRID" id="119062">
    <property type="interactions" value="300"/>
</dbReference>
<dbReference type="CORUM" id="Q9UJZ1"/>
<dbReference type="FunCoup" id="Q9UJZ1">
    <property type="interactions" value="2794"/>
</dbReference>
<dbReference type="IntAct" id="Q9UJZ1">
    <property type="interactions" value="96"/>
</dbReference>
<dbReference type="MINT" id="Q9UJZ1"/>
<dbReference type="STRING" id="9606.ENSP00000348886"/>
<dbReference type="GlyGen" id="Q9UJZ1">
    <property type="glycosylation" value="1 site, 1 O-linked glycan (1 site)"/>
</dbReference>
<dbReference type="iPTMnet" id="Q9UJZ1"/>
<dbReference type="MetOSite" id="Q9UJZ1"/>
<dbReference type="PhosphoSitePlus" id="Q9UJZ1"/>
<dbReference type="SwissPalm" id="Q9UJZ1"/>
<dbReference type="BioMuta" id="STOML2"/>
<dbReference type="DMDM" id="60415944"/>
<dbReference type="OGP" id="Q9UJZ1"/>
<dbReference type="REPRODUCTION-2DPAGE" id="IPI00334190"/>
<dbReference type="CPTAC" id="CPTAC-595"/>
<dbReference type="CPTAC" id="CPTAC-596"/>
<dbReference type="jPOST" id="Q9UJZ1"/>
<dbReference type="MassIVE" id="Q9UJZ1"/>
<dbReference type="PaxDb" id="9606-ENSP00000348886"/>
<dbReference type="PeptideAtlas" id="Q9UJZ1"/>
<dbReference type="ProteomicsDB" id="5767"/>
<dbReference type="ProteomicsDB" id="84697">
    <molecule id="Q9UJZ1-1"/>
</dbReference>
<dbReference type="Pumba" id="Q9UJZ1"/>
<dbReference type="TopDownProteomics" id="Q9UJZ1-1">
    <molecule id="Q9UJZ1-1"/>
</dbReference>
<dbReference type="Antibodypedia" id="25758">
    <property type="antibodies" value="279 antibodies from 30 providers"/>
</dbReference>
<dbReference type="DNASU" id="30968"/>
<dbReference type="Ensembl" id="ENST00000356493.10">
    <molecule id="Q9UJZ1-1"/>
    <property type="protein sequence ID" value="ENSP00000348886.5"/>
    <property type="gene ID" value="ENSG00000165283.16"/>
</dbReference>
<dbReference type="Ensembl" id="ENST00000452248.6">
    <molecule id="Q9UJZ1-2"/>
    <property type="protein sequence ID" value="ENSP00000395743.2"/>
    <property type="gene ID" value="ENSG00000165283.16"/>
</dbReference>
<dbReference type="GeneID" id="30968"/>
<dbReference type="KEGG" id="hsa:30968"/>
<dbReference type="MANE-Select" id="ENST00000356493.10">
    <property type="protein sequence ID" value="ENSP00000348886.5"/>
    <property type="RefSeq nucleotide sequence ID" value="NM_013442.3"/>
    <property type="RefSeq protein sequence ID" value="NP_038470.1"/>
</dbReference>
<dbReference type="UCSC" id="uc003zwi.5">
    <molecule id="Q9UJZ1-1"/>
    <property type="organism name" value="human"/>
</dbReference>
<dbReference type="AGR" id="HGNC:14559"/>
<dbReference type="CTD" id="30968"/>
<dbReference type="DisGeNET" id="30968"/>
<dbReference type="GeneCards" id="STOML2"/>
<dbReference type="HGNC" id="HGNC:14559">
    <property type="gene designation" value="STOML2"/>
</dbReference>
<dbReference type="HPA" id="ENSG00000165283">
    <property type="expression patterns" value="Low tissue specificity"/>
</dbReference>
<dbReference type="MIM" id="608292">
    <property type="type" value="gene"/>
</dbReference>
<dbReference type="neXtProt" id="NX_Q9UJZ1"/>
<dbReference type="OpenTargets" id="ENSG00000165283"/>
<dbReference type="PharmGKB" id="PA37897"/>
<dbReference type="VEuPathDB" id="HostDB:ENSG00000165283"/>
<dbReference type="eggNOG" id="KOG2620">
    <property type="taxonomic scope" value="Eukaryota"/>
</dbReference>
<dbReference type="GeneTree" id="ENSGT01030000234614"/>
<dbReference type="InParanoid" id="Q9UJZ1"/>
<dbReference type="OMA" id="YLQMLPK"/>
<dbReference type="OrthoDB" id="434619at2759"/>
<dbReference type="PAN-GO" id="Q9UJZ1">
    <property type="GO annotations" value="4 GO annotations based on evolutionary models"/>
</dbReference>
<dbReference type="PhylomeDB" id="Q9UJZ1"/>
<dbReference type="TreeFam" id="TF105750"/>
<dbReference type="PathwayCommons" id="Q9UJZ1"/>
<dbReference type="Reactome" id="R-HSA-8949664">
    <property type="pathway name" value="Processing of SMDT1"/>
</dbReference>
<dbReference type="Reactome" id="R-HSA-9840373">
    <property type="pathway name" value="Cellular response to mitochondrial stress"/>
</dbReference>
<dbReference type="SignaLink" id="Q9UJZ1"/>
<dbReference type="SIGNOR" id="Q9UJZ1"/>
<dbReference type="BioGRID-ORCS" id="30968">
    <property type="hits" value="51 hits in 1172 CRISPR screens"/>
</dbReference>
<dbReference type="CD-CODE" id="91857CE7">
    <property type="entry name" value="Nucleolus"/>
</dbReference>
<dbReference type="CD-CODE" id="FB4E32DD">
    <property type="entry name" value="Presynaptic clusters and postsynaptic densities"/>
</dbReference>
<dbReference type="ChiTaRS" id="STOML2">
    <property type="organism name" value="human"/>
</dbReference>
<dbReference type="GeneWiki" id="STOML2"/>
<dbReference type="GenomeRNAi" id="30968"/>
<dbReference type="Pharos" id="Q9UJZ1">
    <property type="development level" value="Tbio"/>
</dbReference>
<dbReference type="PRO" id="PR:Q9UJZ1"/>
<dbReference type="Proteomes" id="UP000005640">
    <property type="component" value="Chromosome 9"/>
</dbReference>
<dbReference type="RNAct" id="Q9UJZ1">
    <property type="molecule type" value="protein"/>
</dbReference>
<dbReference type="Bgee" id="ENSG00000165283">
    <property type="expression patterns" value="Expressed in apex of heart and 203 other cell types or tissues"/>
</dbReference>
<dbReference type="ExpressionAtlas" id="Q9UJZ1">
    <property type="expression patterns" value="baseline and differential"/>
</dbReference>
<dbReference type="GO" id="GO:0015629">
    <property type="term" value="C:actin cytoskeleton"/>
    <property type="evidence" value="ECO:0000314"/>
    <property type="project" value="UniProtKB"/>
</dbReference>
<dbReference type="GO" id="GO:0001772">
    <property type="term" value="C:immunological synapse"/>
    <property type="evidence" value="ECO:0000314"/>
    <property type="project" value="UniProtKB"/>
</dbReference>
<dbReference type="GO" id="GO:0045121">
    <property type="term" value="C:membrane raft"/>
    <property type="evidence" value="ECO:0000314"/>
    <property type="project" value="UniProtKB"/>
</dbReference>
<dbReference type="GO" id="GO:0005743">
    <property type="term" value="C:mitochondrial inner membrane"/>
    <property type="evidence" value="ECO:0000314"/>
    <property type="project" value="UniProtKB"/>
</dbReference>
<dbReference type="GO" id="GO:0005758">
    <property type="term" value="C:mitochondrial intermembrane space"/>
    <property type="evidence" value="ECO:0000314"/>
    <property type="project" value="UniProtKB"/>
</dbReference>
<dbReference type="GO" id="GO:0005739">
    <property type="term" value="C:mitochondrion"/>
    <property type="evidence" value="ECO:0006056"/>
    <property type="project" value="FlyBase"/>
</dbReference>
<dbReference type="GO" id="GO:0005886">
    <property type="term" value="C:plasma membrane"/>
    <property type="evidence" value="ECO:0000314"/>
    <property type="project" value="UniProtKB"/>
</dbReference>
<dbReference type="GO" id="GO:1901612">
    <property type="term" value="F:cardiolipin binding"/>
    <property type="evidence" value="ECO:0000314"/>
    <property type="project" value="UniProtKB"/>
</dbReference>
<dbReference type="GO" id="GO:0051020">
    <property type="term" value="F:GTPase binding"/>
    <property type="evidence" value="ECO:0000353"/>
    <property type="project" value="UniProtKB"/>
</dbReference>
<dbReference type="GO" id="GO:0042608">
    <property type="term" value="F:T cell receptor binding"/>
    <property type="evidence" value="ECO:0000314"/>
    <property type="project" value="UniProtKB"/>
</dbReference>
<dbReference type="GO" id="GO:0035710">
    <property type="term" value="P:CD4-positive, alpha-beta T cell activation"/>
    <property type="evidence" value="ECO:0000250"/>
    <property type="project" value="UniProtKB"/>
</dbReference>
<dbReference type="GO" id="GO:0006874">
    <property type="term" value="P:intracellular calcium ion homeostasis"/>
    <property type="evidence" value="ECO:0000315"/>
    <property type="project" value="UniProtKB"/>
</dbReference>
<dbReference type="GO" id="GO:0010876">
    <property type="term" value="P:lipid localization"/>
    <property type="evidence" value="ECO:0000250"/>
    <property type="project" value="UniProtKB"/>
</dbReference>
<dbReference type="GO" id="GO:0034982">
    <property type="term" value="P:mitochondrial protein processing"/>
    <property type="evidence" value="ECO:0000250"/>
    <property type="project" value="UniProtKB"/>
</dbReference>
<dbReference type="GO" id="GO:0007005">
    <property type="term" value="P:mitochondrion organization"/>
    <property type="evidence" value="ECO:0000315"/>
    <property type="project" value="UniProtKB"/>
</dbReference>
<dbReference type="GO" id="GO:0032743">
    <property type="term" value="P:positive regulation of interleukin-2 production"/>
    <property type="evidence" value="ECO:0000250"/>
    <property type="project" value="UniProtKB"/>
</dbReference>
<dbReference type="GO" id="GO:0051259">
    <property type="term" value="P:protein complex oligomerization"/>
    <property type="evidence" value="ECO:0000314"/>
    <property type="project" value="UniProtKB"/>
</dbReference>
<dbReference type="GO" id="GO:0042776">
    <property type="term" value="P:proton motive force-driven mitochondrial ATP synthesis"/>
    <property type="evidence" value="ECO:0007669"/>
    <property type="project" value="Ensembl"/>
</dbReference>
<dbReference type="GO" id="GO:1990046">
    <property type="term" value="P:stress-induced mitochondrial fusion"/>
    <property type="evidence" value="ECO:0000250"/>
    <property type="project" value="UniProtKB"/>
</dbReference>
<dbReference type="GO" id="GO:0050852">
    <property type="term" value="P:T cell receptor signaling pathway"/>
    <property type="evidence" value="ECO:0000315"/>
    <property type="project" value="UniProtKB"/>
</dbReference>
<dbReference type="CDD" id="cd08829">
    <property type="entry name" value="SPFH_paraslipin"/>
    <property type="match status" value="1"/>
</dbReference>
<dbReference type="FunFam" id="3.30.479.30:FF:000008">
    <property type="entry name" value="Stomatin-like protein 2, mitochondrial"/>
    <property type="match status" value="1"/>
</dbReference>
<dbReference type="Gene3D" id="3.30.479.30">
    <property type="entry name" value="Band 7 domain"/>
    <property type="match status" value="1"/>
</dbReference>
<dbReference type="InterPro" id="IPR050710">
    <property type="entry name" value="Band7/mec-2_domain"/>
</dbReference>
<dbReference type="InterPro" id="IPR001107">
    <property type="entry name" value="Band_7"/>
</dbReference>
<dbReference type="InterPro" id="IPR036013">
    <property type="entry name" value="Band_7/SPFH_dom_sf"/>
</dbReference>
<dbReference type="InterPro" id="IPR032435">
    <property type="entry name" value="STML2-like_C"/>
</dbReference>
<dbReference type="InterPro" id="IPR001972">
    <property type="entry name" value="Stomatin_HflK_fam"/>
</dbReference>
<dbReference type="PANTHER" id="PTHR43327">
    <property type="entry name" value="STOMATIN-LIKE PROTEIN 2, MITOCHONDRIAL"/>
    <property type="match status" value="1"/>
</dbReference>
<dbReference type="PANTHER" id="PTHR43327:SF10">
    <property type="entry name" value="STOMATIN-LIKE PROTEIN 2, MITOCHONDRIAL"/>
    <property type="match status" value="1"/>
</dbReference>
<dbReference type="Pfam" id="PF01145">
    <property type="entry name" value="Band_7"/>
    <property type="match status" value="1"/>
</dbReference>
<dbReference type="Pfam" id="PF16200">
    <property type="entry name" value="Band_7_C"/>
    <property type="match status" value="1"/>
</dbReference>
<dbReference type="PRINTS" id="PR00721">
    <property type="entry name" value="STOMATIN"/>
</dbReference>
<dbReference type="SMART" id="SM00244">
    <property type="entry name" value="PHB"/>
    <property type="match status" value="1"/>
</dbReference>
<dbReference type="SUPFAM" id="SSF117892">
    <property type="entry name" value="Band 7/SPFH domain"/>
    <property type="match status" value="1"/>
</dbReference>